<dbReference type="EC" id="1.4.3.1" evidence="3 5 6 8"/>
<dbReference type="EMBL" id="AB121230">
    <property type="protein sequence ID" value="BAD13387.1"/>
    <property type="molecule type" value="Genomic_DNA"/>
</dbReference>
<dbReference type="SMR" id="Q75WF1"/>
<dbReference type="BRENDA" id="1.4.3.1">
    <property type="organism ID" value="1117"/>
</dbReference>
<dbReference type="GO" id="GO:0005782">
    <property type="term" value="C:peroxisomal matrix"/>
    <property type="evidence" value="ECO:0000250"/>
    <property type="project" value="UniProtKB"/>
</dbReference>
<dbReference type="GO" id="GO:0005777">
    <property type="term" value="C:peroxisome"/>
    <property type="evidence" value="ECO:0000314"/>
    <property type="project" value="UniProtKB"/>
</dbReference>
<dbReference type="GO" id="GO:0008445">
    <property type="term" value="F:D-aspartate oxidase activity"/>
    <property type="evidence" value="ECO:0000314"/>
    <property type="project" value="UniProtKB"/>
</dbReference>
<dbReference type="GO" id="GO:0047821">
    <property type="term" value="F:D-glutamate oxidase activity"/>
    <property type="evidence" value="ECO:0007669"/>
    <property type="project" value="RHEA"/>
</dbReference>
<dbReference type="GO" id="GO:0071949">
    <property type="term" value="F:FAD binding"/>
    <property type="evidence" value="ECO:0007669"/>
    <property type="project" value="InterPro"/>
</dbReference>
<dbReference type="GO" id="GO:1990748">
    <property type="term" value="P:cellular detoxification"/>
    <property type="evidence" value="ECO:0000315"/>
    <property type="project" value="UniProtKB"/>
</dbReference>
<dbReference type="GO" id="GO:0019478">
    <property type="term" value="P:D-amino acid catabolic process"/>
    <property type="evidence" value="ECO:0000314"/>
    <property type="project" value="UniProtKB"/>
</dbReference>
<dbReference type="GO" id="GO:0019740">
    <property type="term" value="P:nitrogen utilization"/>
    <property type="evidence" value="ECO:0000315"/>
    <property type="project" value="UniProtKB"/>
</dbReference>
<dbReference type="Gene3D" id="3.30.9.10">
    <property type="entry name" value="D-Amino Acid Oxidase, subunit A, domain 2"/>
    <property type="match status" value="1"/>
</dbReference>
<dbReference type="Gene3D" id="3.40.50.720">
    <property type="entry name" value="NAD(P)-binding Rossmann-like Domain"/>
    <property type="match status" value="1"/>
</dbReference>
<dbReference type="InterPro" id="IPR023209">
    <property type="entry name" value="DAO"/>
</dbReference>
<dbReference type="InterPro" id="IPR006076">
    <property type="entry name" value="FAD-dep_OxRdtase"/>
</dbReference>
<dbReference type="PANTHER" id="PTHR11530">
    <property type="entry name" value="D-AMINO ACID OXIDASE"/>
    <property type="match status" value="1"/>
</dbReference>
<dbReference type="PANTHER" id="PTHR11530:SF11">
    <property type="entry name" value="D-ASPARTATE OXIDASE"/>
    <property type="match status" value="1"/>
</dbReference>
<dbReference type="Pfam" id="PF01266">
    <property type="entry name" value="DAO"/>
    <property type="match status" value="1"/>
</dbReference>
<dbReference type="PIRSF" id="PIRSF000189">
    <property type="entry name" value="D-aa_oxidase"/>
    <property type="match status" value="1"/>
</dbReference>
<dbReference type="SUPFAM" id="SSF54373">
    <property type="entry name" value="FAD-linked reductases, C-terminal domain"/>
    <property type="match status" value="1"/>
</dbReference>
<dbReference type="SUPFAM" id="SSF51971">
    <property type="entry name" value="Nucleotide-binding domain"/>
    <property type="match status" value="1"/>
</dbReference>
<gene>
    <name evidence="14" type="primary">DDO</name>
</gene>
<evidence type="ECO:0000250" key="1">
    <source>
        <dbReference type="UniProtKB" id="P80324"/>
    </source>
</evidence>
<evidence type="ECO:0000255" key="2"/>
<evidence type="ECO:0000269" key="3">
    <source>
    </source>
</evidence>
<evidence type="ECO:0000269" key="4">
    <source>
    </source>
</evidence>
<evidence type="ECO:0000269" key="5">
    <source>
    </source>
</evidence>
<evidence type="ECO:0000269" key="6">
    <source>
    </source>
</evidence>
<evidence type="ECO:0000269" key="7">
    <source>
    </source>
</evidence>
<evidence type="ECO:0000269" key="8">
    <source ref="4"/>
</evidence>
<evidence type="ECO:0000303" key="9">
    <source>
    </source>
</evidence>
<evidence type="ECO:0000303" key="10">
    <source>
    </source>
</evidence>
<evidence type="ECO:0000303" key="11">
    <source>
    </source>
</evidence>
<evidence type="ECO:0000303" key="12">
    <source>
    </source>
</evidence>
<evidence type="ECO:0000303" key="13">
    <source ref="4"/>
</evidence>
<evidence type="ECO:0000305" key="14"/>
<evidence type="ECO:0000312" key="15">
    <source>
        <dbReference type="EMBL" id="BAD13387.1"/>
    </source>
</evidence>
<reference evidence="15" key="1">
    <citation type="journal article" date="2004" name="J. Biochem.">
        <title>Cloning and expression in Escherichia coli of the D-aspartate oxidase gene from the yeast Cryptococcus humicola and characterization of the recombinant enzyme.</title>
        <authorList>
            <person name="Takahashi S."/>
            <person name="Takahashi T."/>
            <person name="Kera Y."/>
            <person name="Matsunaga R."/>
            <person name="Shibuya H."/>
            <person name="Yamada R.H."/>
        </authorList>
    </citation>
    <scope>NUCLEOTIDE SEQUENCE [GENOMIC DNA]</scope>
    <scope>FUNCTION</scope>
    <scope>CATALYTIC ACTIVITY</scope>
    <scope>BIOPHYSICOCHEMICAL PROPERTIES</scope>
    <scope>INDUCTION</scope>
    <source>
        <strain evidence="9">JCM 9575 / UJ1</strain>
    </source>
</reference>
<reference evidence="14" key="2">
    <citation type="journal article" date="1996" name="Biochim. Biophys. Acta">
        <title>Purification and properties of D-aspartate oxidase from Cryptococcus humicolus UJ1.</title>
        <authorList>
            <person name="Yamada R."/>
            <person name="Ujiie H."/>
            <person name="Kera Y."/>
            <person name="Nakase T."/>
            <person name="Kitagawa K."/>
            <person name="Imasaka T."/>
            <person name="Arimoto K."/>
            <person name="Takahashi M."/>
            <person name="Matsumura Y."/>
        </authorList>
    </citation>
    <scope>PROTEIN SEQUENCE OF 1-20</scope>
    <scope>FUNCTION</scope>
    <scope>CATALYTIC ACTIVITY</scope>
    <scope>COFACTOR</scope>
    <scope>ACTIVITY REGULATION</scope>
    <scope>BIOPHYSICOCHEMICAL PROPERTIES</scope>
    <scope>SUBUNIT</scope>
    <scope>INDUCTION</scope>
    <source>
        <strain evidence="11">JCM 9575 / UJ1</strain>
    </source>
</reference>
<reference evidence="14" key="3">
    <citation type="journal article" date="1998" name="Biochim. Biophys. Acta">
        <title>Peroxisomal localization of D-aspartate oxidase and development of peroxisomes in the yeast Cryptococcus humicolus UJ1 grown on D-aspartate.</title>
        <authorList>
            <person name="Kera Y."/>
            <person name="Niino A."/>
            <person name="Ikeda T."/>
            <person name="Okada H."/>
            <person name="Yamada R."/>
        </authorList>
    </citation>
    <scope>SUBCELLULAR LOCATION</scope>
    <scope>INDUCTION</scope>
    <source>
        <strain evidence="12">JCM 9575 / UJ1</strain>
    </source>
</reference>
<reference evidence="14" key="4">
    <citation type="journal article" date="2000" name="J. Mol. Catal., B Enzym.">
        <title>Apoenzyme from Cryptococcus humicolus UJ1 d-aspartate oxidase.</title>
        <authorList>
            <person name="Iwazaki I."/>
            <person name="Yamashita S."/>
            <person name="Arimoto K."/>
            <person name="Takahashi M."/>
            <person name="Kera Y."/>
            <person name="Yamada R."/>
        </authorList>
    </citation>
    <scope>FUNCTION</scope>
    <scope>CATALYTIC ACTIVITY</scope>
    <scope>COFACTOR</scope>
    <scope>BIOPHYSICOCHEMICAL PROPERTIES</scope>
    <scope>SUBUNIT</scope>
    <source>
        <strain evidence="13">JCM 9575 / UJ1</strain>
    </source>
</reference>
<reference evidence="14" key="5">
    <citation type="journal article" date="2005" name="Yeast">
        <title>Physiological role of D-aspartate oxidase in the assimilation and detoxification of D-aspartate in the yeast Cryptococcus humicola.</title>
        <authorList>
            <person name="Takahashi S."/>
            <person name="Kakuichi T."/>
            <person name="Fujii K."/>
            <person name="Kera Y."/>
            <person name="Yamada R.H."/>
        </authorList>
    </citation>
    <scope>FUNCTION</scope>
    <scope>INDUCTION</scope>
    <scope>DISRUPTION PHENOTYPE</scope>
    <source>
        <strain evidence="10">JCM 9575 / UJ1</strain>
    </source>
</reference>
<reference evidence="14" key="6">
    <citation type="journal article" date="2016" name="J. Biochem.">
        <title>Possible role of a histidine residue in the substrate specificity of yeast d-aspartate oxidase.</title>
        <authorList>
            <person name="Takahashi S."/>
            <person name="Shimada K."/>
            <person name="Nozawa S."/>
            <person name="Goto M."/>
            <person name="Abe K."/>
            <person name="Kera Y."/>
        </authorList>
    </citation>
    <scope>FUNCTION</scope>
    <scope>CATALYTIC ACTIVITY</scope>
    <scope>COFACTOR</scope>
    <scope>ACTIVITY REGULATION</scope>
    <scope>BIOPHYSICOCHEMICAL PROPERTIES</scope>
    <scope>MUTAGENESIS OF HIS-56</scope>
</reference>
<organism>
    <name type="scientific">Vanrija humicola</name>
    <name type="common">Yeast</name>
    <name type="synonym">Cryptococcus humicola</name>
    <dbReference type="NCBI Taxonomy" id="5417"/>
    <lineage>
        <taxon>Eukaryota</taxon>
        <taxon>Fungi</taxon>
        <taxon>Dikarya</taxon>
        <taxon>Basidiomycota</taxon>
        <taxon>Agaricomycotina</taxon>
        <taxon>Tremellomycetes</taxon>
        <taxon>Trichosporonales</taxon>
        <taxon>Trichosporonaceae</taxon>
        <taxon>Vanrija</taxon>
    </lineage>
</organism>
<keyword id="KW-0903">Direct protein sequencing</keyword>
<keyword id="KW-0274">FAD</keyword>
<keyword id="KW-0285">Flavoprotein</keyword>
<keyword id="KW-0560">Oxidoreductase</keyword>
<keyword id="KW-0576">Peroxisome</keyword>
<sequence>MPPSDPIIVLGAGVIGLTTAVRLLEAHLGANVHILADHWPSDALDAQYASTIAGAHHLSFADDGDARQRRWDMRTFDVLYDEWKAVGERTGLMALTQTEMWEGATSHLAVYEGNPDFRVLDPRTAPCSNITHMVSFTSLTIAPTVYLAALEARVRDLGAKLHRAHVPSLGALRTDPALLALYTRPPAAVFVCAGLGARHLVPAPEAAALFPTRGQVVVVRAPWMRAGFTRQVGSLGGGEGGTRTYIIPRCNGEVVLGGTMEQGDWTPYPRDETVTDILTRALQICPDIAPPYARSWPKDDQVAALRSIVVRDAVGFRPSRAGGARVALASAAGMRVVYNYGHGGAGWQSCWGCAEDAVALWAGGAGGARL</sequence>
<accession>Q75WF1</accession>
<feature type="chain" id="PRO_0000459789" description="D-aspartate oxidase">
    <location>
        <begin position="1"/>
        <end position="370"/>
    </location>
</feature>
<feature type="short sequence motif" description="Microbody targeting signal" evidence="2">
    <location>
        <begin position="368"/>
        <end position="370"/>
    </location>
</feature>
<feature type="binding site" evidence="1">
    <location>
        <position position="15"/>
    </location>
    <ligand>
        <name>FAD</name>
        <dbReference type="ChEBI" id="CHEBI:57692"/>
    </ligand>
</feature>
<feature type="binding site" evidence="1">
    <location>
        <position position="49"/>
    </location>
    <ligand>
        <name>FAD</name>
        <dbReference type="ChEBI" id="CHEBI:57692"/>
    </ligand>
</feature>
<feature type="binding site" evidence="1">
    <location>
        <position position="50"/>
    </location>
    <ligand>
        <name>FAD</name>
        <dbReference type="ChEBI" id="CHEBI:57692"/>
    </ligand>
</feature>
<feature type="binding site" evidence="1">
    <location>
        <position position="54"/>
    </location>
    <ligand>
        <name>FAD</name>
        <dbReference type="ChEBI" id="CHEBI:57692"/>
    </ligand>
</feature>
<feature type="binding site" evidence="1">
    <location>
        <position position="166"/>
    </location>
    <ligand>
        <name>FAD</name>
        <dbReference type="ChEBI" id="CHEBI:57692"/>
    </ligand>
</feature>
<feature type="binding site" evidence="1">
    <location>
        <position position="317"/>
    </location>
    <ligand>
        <name>FAD</name>
        <dbReference type="ChEBI" id="CHEBI:57692"/>
    </ligand>
</feature>
<feature type="binding site" evidence="1">
    <location>
        <position position="346"/>
    </location>
    <ligand>
        <name>FAD</name>
        <dbReference type="ChEBI" id="CHEBI:57692"/>
    </ligand>
</feature>
<feature type="binding site" evidence="1">
    <location>
        <position position="348"/>
    </location>
    <ligand>
        <name>FAD</name>
        <dbReference type="ChEBI" id="CHEBI:57692"/>
    </ligand>
</feature>
<feature type="mutagenesis site" description="Alters substrate specificity; capable of oxidizing D-methionine, D-phenylalanine and D-leucine. Markedly inhibited by anthranilate." evidence="5">
    <original>H</original>
    <variation>A</variation>
    <variation>N</variation>
    <location>
        <position position="56"/>
    </location>
</feature>
<feature type="mutagenesis site" description="Alters substrate specificity; capable of oxidizing D-leucine. Markedly inhibited by benzoate." evidence="5">
    <original>H</original>
    <variation>A</variation>
    <location>
        <position position="56"/>
    </location>
</feature>
<feature type="mutagenesis site" description="Loss of activity." evidence="5">
    <original>H</original>
    <variation>D</variation>
    <variation>F</variation>
    <variation>K</variation>
    <location>
        <position position="56"/>
    </location>
</feature>
<feature type="mutagenesis site" description="Alters substrate specificity; capable of oxidizing D-glutamine." evidence="5">
    <original>H</original>
    <variation>N</variation>
    <location>
        <position position="56"/>
    </location>
</feature>
<protein>
    <recommendedName>
        <fullName>D-aspartate oxidase</fullName>
        <shortName evidence="10">ChDASPO</shortName>
        <shortName evidence="9">ChDDO</shortName>
        <shortName evidence="14">DASOX</shortName>
        <shortName evidence="10">DASPO</shortName>
        <shortName evidence="9">DDO</shortName>
        <ecNumber evidence="3 5 6 8">1.4.3.1</ecNumber>
    </recommendedName>
</protein>
<comment type="function">
    <text evidence="3 4 5 6 8">Selectively catalyzes the oxidative deamination of acidic amino acids (PubMed:15115779, PubMed:26519738, PubMed:8645733, Ref.4). Protects the organism from the toxicity of D-amino acids (PubMed:16278929). Enables the organism to utilize D-amino acids as a source of nutrients (PubMed:16278929). Enables the organism to utilize D-aspartate as a source of nitrogen and carbon (PubMed:16278929).</text>
</comment>
<comment type="catalytic activity">
    <reaction evidence="3 5 6 8">
        <text>D-aspartate + O2 + H2O = oxaloacetate + H2O2 + NH4(+)</text>
        <dbReference type="Rhea" id="RHEA:12512"/>
        <dbReference type="ChEBI" id="CHEBI:15377"/>
        <dbReference type="ChEBI" id="CHEBI:15379"/>
        <dbReference type="ChEBI" id="CHEBI:16240"/>
        <dbReference type="ChEBI" id="CHEBI:16452"/>
        <dbReference type="ChEBI" id="CHEBI:28938"/>
        <dbReference type="ChEBI" id="CHEBI:29990"/>
        <dbReference type="EC" id="1.4.3.1"/>
    </reaction>
    <physiologicalReaction direction="left-to-right" evidence="3 5 6 8">
        <dbReference type="Rhea" id="RHEA:12513"/>
    </physiologicalReaction>
</comment>
<comment type="catalytic activity">
    <reaction evidence="3 5 6">
        <text>D-glutamate + O2 + H2O = H2O2 + 2-oxoglutarate + NH4(+)</text>
        <dbReference type="Rhea" id="RHEA:10028"/>
        <dbReference type="ChEBI" id="CHEBI:15377"/>
        <dbReference type="ChEBI" id="CHEBI:15379"/>
        <dbReference type="ChEBI" id="CHEBI:16240"/>
        <dbReference type="ChEBI" id="CHEBI:16810"/>
        <dbReference type="ChEBI" id="CHEBI:28938"/>
        <dbReference type="ChEBI" id="CHEBI:29986"/>
    </reaction>
    <physiologicalReaction direction="left-to-right" evidence="3 5 6">
        <dbReference type="Rhea" id="RHEA:10029"/>
    </physiologicalReaction>
</comment>
<comment type="cofactor">
    <cofactor evidence="5 6 8">
        <name>FAD</name>
        <dbReference type="ChEBI" id="CHEBI:57692"/>
    </cofactor>
</comment>
<comment type="activity regulation">
    <text evidence="3 5 6">Inhibited by malonate and D-malate (PubMed:15115779, PubMed:26519738, PubMed:8645733). Very mildly inhibited by benzoate, ethylenediaminetetraacetic acid (EDTA), crotonate and anthranilate (PubMed:15115779, PubMed:26519738, PubMed:8645733). May be very mildly inhibited by meso-tartrate (PubMed:15115779, PubMed:26519738, PubMed:8645733).</text>
</comment>
<comment type="biophysicochemical properties">
    <kinetics>
        <KM evidence="3">2.92 mM for D-aspartate (at 37 degrees Celsius)</KM>
        <KM evidence="6">3.65 mM for D-aspartate (at 37 degrees Celsius and at pH 7.5)</KM>
        <KM evidence="8">3.61 mM for D-aspartate (at 37 degrees Celsius and at pH 7.5)</KM>
        <KM evidence="5">2.5 mM for D-aspartate (at 37 degrees Celsius and at pH 7.5)</KM>
        <KM evidence="3">62.6 mM for D-glutamate (at 37 degrees Celsius)</KM>
        <KM evidence="6">152 mM for D-glutamate (at 37 degrees Celsius and at pH 7.5)</KM>
        <KM evidence="5">106 mM for D-glutamate (at 37 degrees Celsius and at pH 7.5)</KM>
        <KM evidence="3">85.3 mM for N-methyl D-aspartate (at 37 degrees Celsius)</KM>
        <KM evidence="6">28 mM for N-methyl D-aspartate (at 37 degrees Celsius and at pH 7.5)</KM>
        <text evidence="3 5 6 8">kcat is 82.6 sec(-1) with D-aspartate as substrate (at 37 degrees Celsius) (PubMed:15115779). kcat is 54.2 sec(-1) with D-aspartate as substrate (at 37 degrees Celsius and at pH 7.5) (PubMed:8645733). kcat is 127.7 sec(-1) with D-aspartate as substrate (at 37 degrees Celsius and at pH 7.5) (Ref.4). kcat is 74.5 sec(-1) with D-aspartate as substrate (at 37 degrees Celsius and at pH 7.5) (PubMed:26519738). kcat is 2 sec(-1) with D-glutamate as substrate (at 37 degrees Celsius) (PubMed:15115779). kcat is 2.04 sec(-1) with D-glutamate as substrate (at 37 degrees Celsius and at pH 7.5) (PubMed:8645733). kcat is 2.6 sec(-1) with D-glutamate as substrate (at 37 degrees Celsius and at pH 7.5) (PubMed:26519738). kcat is 38.1 sec(-1) with N-methyl D-aspartate as substrate (at 37 degrees Celsius) (PubMed:15115779). kcat is 10.6 sec(-1) with N-methyl D-aspartate as substrate (at 37 degrees Celsius and at pH 7.5) (PubMed:8645733).</text>
    </kinetics>
    <phDependence>
        <text evidence="3 6">Optimum pH is 7.5.</text>
    </phDependence>
    <temperatureDependence>
        <text evidence="3">Optimum temperature is 37 degrees Celsius.</text>
    </temperatureDependence>
</comment>
<comment type="subunit">
    <text evidence="6 8">Homotetramer.</text>
</comment>
<comment type="subcellular location">
    <subcellularLocation>
        <location evidence="7">Peroxisome matrix</location>
    </subcellularLocation>
</comment>
<comment type="induction">
    <text evidence="3 4 6 7">Induced when grown on D-aspartate as sole nitrogen or carbon source (PubMed:15115779, PubMed:16278929, PubMed:8645733, PubMed:9545602). Not induced when grown on L-aspartate, D-glutamate or D-alanine as sole nitrogen source, or poor nitrogen sources such as L-proline or gamma-aminobutyrate (GABA) (PubMed:15115779).</text>
</comment>
<comment type="disruption phenotype">
    <text evidence="4">Unable to utilize D-aspartate as a source of nitrogen.</text>
</comment>
<comment type="similarity">
    <text evidence="14">Belongs to the DAMOX/DASOX family.</text>
</comment>
<proteinExistence type="evidence at protein level"/>
<name>OXDD_VANHU</name>